<proteinExistence type="inferred from homology"/>
<dbReference type="EC" id="7.1.2.2" evidence="1"/>
<dbReference type="EMBL" id="CP000792">
    <property type="protein sequence ID" value="EAT97451.1"/>
    <property type="molecule type" value="Genomic_DNA"/>
</dbReference>
<dbReference type="RefSeq" id="WP_002939420.1">
    <property type="nucleotide sequence ID" value="NC_009802.2"/>
</dbReference>
<dbReference type="SMR" id="A7ZC37"/>
<dbReference type="STRING" id="360104.CCC13826_0917"/>
<dbReference type="GeneID" id="28662125"/>
<dbReference type="KEGG" id="cco:CCC13826_0917"/>
<dbReference type="eggNOG" id="COG0055">
    <property type="taxonomic scope" value="Bacteria"/>
</dbReference>
<dbReference type="HOGENOM" id="CLU_022398_0_2_7"/>
<dbReference type="OrthoDB" id="9801639at2"/>
<dbReference type="Proteomes" id="UP000001121">
    <property type="component" value="Chromosome"/>
</dbReference>
<dbReference type="GO" id="GO:0005886">
    <property type="term" value="C:plasma membrane"/>
    <property type="evidence" value="ECO:0007669"/>
    <property type="project" value="UniProtKB-SubCell"/>
</dbReference>
<dbReference type="GO" id="GO:0045259">
    <property type="term" value="C:proton-transporting ATP synthase complex"/>
    <property type="evidence" value="ECO:0007669"/>
    <property type="project" value="UniProtKB-KW"/>
</dbReference>
<dbReference type="GO" id="GO:0005524">
    <property type="term" value="F:ATP binding"/>
    <property type="evidence" value="ECO:0007669"/>
    <property type="project" value="UniProtKB-UniRule"/>
</dbReference>
<dbReference type="GO" id="GO:0016887">
    <property type="term" value="F:ATP hydrolysis activity"/>
    <property type="evidence" value="ECO:0007669"/>
    <property type="project" value="InterPro"/>
</dbReference>
<dbReference type="GO" id="GO:0046933">
    <property type="term" value="F:proton-transporting ATP synthase activity, rotational mechanism"/>
    <property type="evidence" value="ECO:0007669"/>
    <property type="project" value="UniProtKB-UniRule"/>
</dbReference>
<dbReference type="CDD" id="cd18110">
    <property type="entry name" value="ATP-synt_F1_beta_C"/>
    <property type="match status" value="1"/>
</dbReference>
<dbReference type="CDD" id="cd18115">
    <property type="entry name" value="ATP-synt_F1_beta_N"/>
    <property type="match status" value="1"/>
</dbReference>
<dbReference type="CDD" id="cd01133">
    <property type="entry name" value="F1-ATPase_beta_CD"/>
    <property type="match status" value="1"/>
</dbReference>
<dbReference type="FunFam" id="1.10.1140.10:FF:000001">
    <property type="entry name" value="ATP synthase subunit beta"/>
    <property type="match status" value="1"/>
</dbReference>
<dbReference type="FunFam" id="3.40.50.300:FF:000004">
    <property type="entry name" value="ATP synthase subunit beta"/>
    <property type="match status" value="1"/>
</dbReference>
<dbReference type="Gene3D" id="2.40.10.170">
    <property type="match status" value="1"/>
</dbReference>
<dbReference type="Gene3D" id="1.10.1140.10">
    <property type="entry name" value="Bovine Mitochondrial F1-atpase, Atp Synthase Beta Chain, Chain D, domain 3"/>
    <property type="match status" value="1"/>
</dbReference>
<dbReference type="Gene3D" id="3.40.50.300">
    <property type="entry name" value="P-loop containing nucleotide triphosphate hydrolases"/>
    <property type="match status" value="1"/>
</dbReference>
<dbReference type="HAMAP" id="MF_01347">
    <property type="entry name" value="ATP_synth_beta_bact"/>
    <property type="match status" value="1"/>
</dbReference>
<dbReference type="InterPro" id="IPR003593">
    <property type="entry name" value="AAA+_ATPase"/>
</dbReference>
<dbReference type="InterPro" id="IPR055190">
    <property type="entry name" value="ATP-synt_VA_C"/>
</dbReference>
<dbReference type="InterPro" id="IPR005722">
    <property type="entry name" value="ATP_synth_F1_bsu"/>
</dbReference>
<dbReference type="InterPro" id="IPR020003">
    <property type="entry name" value="ATPase_a/bsu_AS"/>
</dbReference>
<dbReference type="InterPro" id="IPR050053">
    <property type="entry name" value="ATPase_alpha/beta_chains"/>
</dbReference>
<dbReference type="InterPro" id="IPR004100">
    <property type="entry name" value="ATPase_F1/V1/A1_a/bsu_N"/>
</dbReference>
<dbReference type="InterPro" id="IPR036121">
    <property type="entry name" value="ATPase_F1/V1/A1_a/bsu_N_sf"/>
</dbReference>
<dbReference type="InterPro" id="IPR000194">
    <property type="entry name" value="ATPase_F1/V1/A1_a/bsu_nucl-bd"/>
</dbReference>
<dbReference type="InterPro" id="IPR024034">
    <property type="entry name" value="ATPase_F1/V1_b/a_C"/>
</dbReference>
<dbReference type="InterPro" id="IPR027417">
    <property type="entry name" value="P-loop_NTPase"/>
</dbReference>
<dbReference type="NCBIfam" id="TIGR01039">
    <property type="entry name" value="atpD"/>
    <property type="match status" value="1"/>
</dbReference>
<dbReference type="PANTHER" id="PTHR15184">
    <property type="entry name" value="ATP SYNTHASE"/>
    <property type="match status" value="1"/>
</dbReference>
<dbReference type="PANTHER" id="PTHR15184:SF71">
    <property type="entry name" value="ATP SYNTHASE SUBUNIT BETA, MITOCHONDRIAL"/>
    <property type="match status" value="1"/>
</dbReference>
<dbReference type="Pfam" id="PF00006">
    <property type="entry name" value="ATP-synt_ab"/>
    <property type="match status" value="1"/>
</dbReference>
<dbReference type="Pfam" id="PF02874">
    <property type="entry name" value="ATP-synt_ab_N"/>
    <property type="match status" value="1"/>
</dbReference>
<dbReference type="Pfam" id="PF22919">
    <property type="entry name" value="ATP-synt_VA_C"/>
    <property type="match status" value="1"/>
</dbReference>
<dbReference type="SMART" id="SM00382">
    <property type="entry name" value="AAA"/>
    <property type="match status" value="1"/>
</dbReference>
<dbReference type="SUPFAM" id="SSF47917">
    <property type="entry name" value="C-terminal domain of alpha and beta subunits of F1 ATP synthase"/>
    <property type="match status" value="1"/>
</dbReference>
<dbReference type="SUPFAM" id="SSF50615">
    <property type="entry name" value="N-terminal domain of alpha and beta subunits of F1 ATP synthase"/>
    <property type="match status" value="1"/>
</dbReference>
<dbReference type="SUPFAM" id="SSF52540">
    <property type="entry name" value="P-loop containing nucleoside triphosphate hydrolases"/>
    <property type="match status" value="1"/>
</dbReference>
<dbReference type="PROSITE" id="PS00152">
    <property type="entry name" value="ATPASE_ALPHA_BETA"/>
    <property type="match status" value="1"/>
</dbReference>
<gene>
    <name evidence="1" type="primary">atpD</name>
    <name type="ordered locus">Ccon26_04440</name>
    <name type="ORF">CCC13826_0917</name>
</gene>
<comment type="function">
    <text evidence="1">Produces ATP from ADP in the presence of a proton gradient across the membrane. The catalytic sites are hosted primarily by the beta subunits.</text>
</comment>
<comment type="catalytic activity">
    <reaction evidence="1">
        <text>ATP + H2O + 4 H(+)(in) = ADP + phosphate + 5 H(+)(out)</text>
        <dbReference type="Rhea" id="RHEA:57720"/>
        <dbReference type="ChEBI" id="CHEBI:15377"/>
        <dbReference type="ChEBI" id="CHEBI:15378"/>
        <dbReference type="ChEBI" id="CHEBI:30616"/>
        <dbReference type="ChEBI" id="CHEBI:43474"/>
        <dbReference type="ChEBI" id="CHEBI:456216"/>
        <dbReference type="EC" id="7.1.2.2"/>
    </reaction>
</comment>
<comment type="subunit">
    <text evidence="1">F-type ATPases have 2 components, CF(1) - the catalytic core - and CF(0) - the membrane proton channel. CF(1) has five subunits: alpha(3), beta(3), gamma(1), delta(1), epsilon(1). CF(0) has three main subunits: a(1), b(2) and c(9-12). The alpha and beta chains form an alternating ring which encloses part of the gamma chain. CF(1) is attached to CF(0) by a central stalk formed by the gamma and epsilon chains, while a peripheral stalk is formed by the delta and b chains.</text>
</comment>
<comment type="subcellular location">
    <subcellularLocation>
        <location evidence="1">Cell inner membrane</location>
        <topology evidence="1">Peripheral membrane protein</topology>
    </subcellularLocation>
</comment>
<comment type="similarity">
    <text evidence="1">Belongs to the ATPase alpha/beta chains family.</text>
</comment>
<keyword id="KW-0066">ATP synthesis</keyword>
<keyword id="KW-0067">ATP-binding</keyword>
<keyword id="KW-0997">Cell inner membrane</keyword>
<keyword id="KW-1003">Cell membrane</keyword>
<keyword id="KW-0139">CF(1)</keyword>
<keyword id="KW-0375">Hydrogen ion transport</keyword>
<keyword id="KW-0406">Ion transport</keyword>
<keyword id="KW-0472">Membrane</keyword>
<keyword id="KW-0547">Nucleotide-binding</keyword>
<keyword id="KW-1278">Translocase</keyword>
<keyword id="KW-0813">Transport</keyword>
<accession>A7ZC37</accession>
<evidence type="ECO:0000255" key="1">
    <source>
        <dbReference type="HAMAP-Rule" id="MF_01347"/>
    </source>
</evidence>
<feature type="chain" id="PRO_0000339501" description="ATP synthase subunit beta">
    <location>
        <begin position="1"/>
        <end position="465"/>
    </location>
</feature>
<feature type="binding site" evidence="1">
    <location>
        <begin position="152"/>
        <end position="159"/>
    </location>
    <ligand>
        <name>ATP</name>
        <dbReference type="ChEBI" id="CHEBI:30616"/>
    </ligand>
</feature>
<reference key="1">
    <citation type="submission" date="2007-10" db="EMBL/GenBank/DDBJ databases">
        <title>Genome sequence of Campylobacter concisus 13826 isolated from human feces.</title>
        <authorList>
            <person name="Fouts D.E."/>
            <person name="Mongodin E.F."/>
            <person name="Puiu D."/>
            <person name="Sebastian Y."/>
            <person name="Miller W.G."/>
            <person name="Mandrell R.E."/>
            <person name="On S."/>
            <person name="Nelson K.E."/>
        </authorList>
    </citation>
    <scope>NUCLEOTIDE SEQUENCE [LARGE SCALE GENOMIC DNA]</scope>
    <source>
        <strain>13826</strain>
    </source>
</reference>
<organism>
    <name type="scientific">Campylobacter concisus (strain 13826)</name>
    <dbReference type="NCBI Taxonomy" id="360104"/>
    <lineage>
        <taxon>Bacteria</taxon>
        <taxon>Pseudomonadati</taxon>
        <taxon>Campylobacterota</taxon>
        <taxon>Epsilonproteobacteria</taxon>
        <taxon>Campylobacterales</taxon>
        <taxon>Campylobacteraceae</taxon>
        <taxon>Campylobacter</taxon>
    </lineage>
</organism>
<protein>
    <recommendedName>
        <fullName evidence="1">ATP synthase subunit beta</fullName>
        <ecNumber evidence="1">7.1.2.2</ecNumber>
    </recommendedName>
    <alternativeName>
        <fullName evidence="1">ATP synthase F1 sector subunit beta</fullName>
    </alternativeName>
    <alternativeName>
        <fullName evidence="1">F-ATPase subunit beta</fullName>
    </alternativeName>
</protein>
<sequence>MKGVISQVMGPVVDVDFNDYLPKINEAIEVFFEVEGKKHKLILEVAAHLGDNRVRTIAMDMSEGLTRGLEAKALGAPISVPVGEKVLGRIFNVVGDLIDEGEGINFDKHWSIHRDPPPFEEQSTKSEIFETGIKVVDLLAPYAKGGKVGLFGGAGVGKTVIIMELIHNVAFKHSGYSVFAGVGERTREGNDLYHEMKESNVLDKVALCYGQMNEPPGARNRIALTGLTMAEYFRDEMGLDVLMFIDNIFRFSQSGAEMSALLGRIPSAVGYQPTLASEMGKFQERITSTKKGSITSVQAVYVPADDLTDPAPATVFAHLDATTVLNRSIAEKGIYPAVDPLDSTSRMLDPQILGADHYKVARGVQAVLQKYKDLQDIIAILGMDELSEEDKLTVDRARKIERFLSQPFFVAEVFTGSPGKYVSLDENIAGFKGILEGKYDHLPEAAFYMVGNIDEALAKAEKLKA</sequence>
<name>ATPB_CAMC1</name>